<organism>
    <name type="scientific">Mus musculus</name>
    <name type="common">Mouse</name>
    <dbReference type="NCBI Taxonomy" id="10090"/>
    <lineage>
        <taxon>Eukaryota</taxon>
        <taxon>Metazoa</taxon>
        <taxon>Chordata</taxon>
        <taxon>Craniata</taxon>
        <taxon>Vertebrata</taxon>
        <taxon>Euteleostomi</taxon>
        <taxon>Mammalia</taxon>
        <taxon>Eutheria</taxon>
        <taxon>Euarchontoglires</taxon>
        <taxon>Glires</taxon>
        <taxon>Rodentia</taxon>
        <taxon>Myomorpha</taxon>
        <taxon>Muroidea</taxon>
        <taxon>Muridae</taxon>
        <taxon>Murinae</taxon>
        <taxon>Mus</taxon>
        <taxon>Mus</taxon>
    </lineage>
</organism>
<name>GOGA5_MOUSE</name>
<feature type="initiator methionine" description="Removed" evidence="3">
    <location>
        <position position="1"/>
    </location>
</feature>
<feature type="chain" id="PRO_0000190062" description="Golgin subfamily A member 5">
    <location>
        <begin position="2"/>
        <end position="729"/>
    </location>
</feature>
<feature type="topological domain" description="Cytoplasmic" evidence="4">
    <location>
        <begin position="2"/>
        <end position="696"/>
    </location>
</feature>
<feature type="transmembrane region" description="Helical; Anchor for type IV membrane protein" evidence="4">
    <location>
        <begin position="697"/>
        <end position="717"/>
    </location>
</feature>
<feature type="topological domain" description="Lumenal" evidence="4">
    <location>
        <begin position="718"/>
        <end position="729"/>
    </location>
</feature>
<feature type="region of interest" description="Disordered" evidence="5">
    <location>
        <begin position="89"/>
        <end position="222"/>
    </location>
</feature>
<feature type="region of interest" description="Disordered" evidence="5">
    <location>
        <begin position="626"/>
        <end position="645"/>
    </location>
</feature>
<feature type="coiled-coil region" evidence="4">
    <location>
        <begin position="215"/>
        <end position="629"/>
    </location>
</feature>
<feature type="compositionally biased region" description="Basic and acidic residues" evidence="5">
    <location>
        <begin position="134"/>
        <end position="146"/>
    </location>
</feature>
<feature type="compositionally biased region" description="Low complexity" evidence="5">
    <location>
        <begin position="148"/>
        <end position="167"/>
    </location>
</feature>
<feature type="compositionally biased region" description="Polar residues" evidence="5">
    <location>
        <begin position="175"/>
        <end position="186"/>
    </location>
</feature>
<feature type="compositionally biased region" description="Polar residues" evidence="5">
    <location>
        <begin position="626"/>
        <end position="638"/>
    </location>
</feature>
<feature type="modified residue" description="N-acetylserine" evidence="3">
    <location>
        <position position="2"/>
    </location>
</feature>
<feature type="modified residue" description="Dimethylated arginine" evidence="2">
    <location>
        <position position="27"/>
    </location>
</feature>
<feature type="modified residue" description="Dimethylated arginine" evidence="2">
    <location>
        <position position="89"/>
    </location>
</feature>
<feature type="modified residue" description="Phosphoserine" evidence="7 8">
    <location>
        <position position="116"/>
    </location>
</feature>
<feature type="sequence conflict" description="In Ref. 1; AAF21628." evidence="6" ref="1">
    <original>D</original>
    <variation>N</variation>
    <location>
        <position position="93"/>
    </location>
</feature>
<feature type="sequence conflict" description="In Ref. 1; AAF21628." evidence="6" ref="1">
    <original>G</original>
    <variation>D</variation>
    <location>
        <position position="145"/>
    </location>
</feature>
<feature type="sequence conflict" description="In Ref. 3; BAE31649/BAE31289." evidence="6" ref="3">
    <original>N</original>
    <variation>D</variation>
    <location>
        <position position="224"/>
    </location>
</feature>
<feature type="sequence conflict" description="In Ref. 3; BAE23668." evidence="6" ref="3">
    <original>V</original>
    <variation>M</variation>
    <location>
        <position position="312"/>
    </location>
</feature>
<feature type="sequence conflict" description="In Ref. 1; AAF21628." evidence="6" ref="1">
    <original>A</original>
    <variation>S</variation>
    <location>
        <position position="417"/>
    </location>
</feature>
<feature type="sequence conflict" description="In Ref. 3; BAE40601." evidence="6" ref="3">
    <original>S</original>
    <variation>R</variation>
    <location>
        <position position="463"/>
    </location>
</feature>
<feature type="sequence conflict" description="In Ref. 1; AAF21628." evidence="6" ref="1">
    <original>S</original>
    <variation>P</variation>
    <location>
        <position position="640"/>
    </location>
</feature>
<feature type="sequence conflict" description="In Ref. 3; BAE31649/BAE31289." evidence="6" ref="3">
    <original>G</original>
    <variation>R</variation>
    <location>
        <position position="669"/>
    </location>
</feature>
<comment type="function">
    <text evidence="1">Involved in maintaining Golgi structure. Stimulates the formation of Golgi stacks and ribbons. Involved in intra-Golgi retrograde transport (By similarity).</text>
</comment>
<comment type="subunit">
    <text evidence="1">Homodimer. Interacts with RAB1A that has been activated by GTP-binding. Interacts with isoform CASP of CUX1 (By similarity).</text>
</comment>
<comment type="interaction">
    <interactant intactId="EBI-644242">
        <id>Q9QYE6</id>
    </interactant>
    <interactant intactId="EBI-641874">
        <id>Q99N72</id>
        <label>Mcf2</label>
    </interactant>
    <organismsDiffer>false</organismsDiffer>
    <experiments>3</experiments>
</comment>
<comment type="subcellular location">
    <subcellularLocation>
        <location evidence="1">Golgi apparatus membrane</location>
        <topology evidence="1">Single-pass type IV membrane protein</topology>
    </subcellularLocation>
    <text evidence="1">Found throughout the Golgi.</text>
</comment>
<comment type="PTM">
    <text evidence="1">Highly phosphorylated during mitosis. Phosphorylation is barely detectable during interphase (By similarity).</text>
</comment>
<accession>Q9QYE6</accession>
<accession>O88317</accession>
<accession>Q3TGE7</accession>
<accession>Q3U6S5</accession>
<accession>Q3UUF9</accession>
<reference key="1">
    <citation type="submission" date="1997-09" db="EMBL/GenBank/DDBJ databases">
        <title>Suppression of anti-immunoglobulin-induced apoptosis in B lymphoma cells by a novel nuclear protein.</title>
        <authorList>
            <person name="Ku P.T."/>
            <person name="You M.J."/>
            <person name="Cottam M.K."/>
            <person name="Bose H.R. Jr."/>
        </authorList>
    </citation>
    <scope>NUCLEOTIDE SEQUENCE [MRNA]</scope>
    <source>
        <tissue>B-cell lymphoma</tissue>
    </source>
</reference>
<reference key="2">
    <citation type="submission" date="1998-08" db="EMBL/GenBank/DDBJ databases">
        <title>Unknown, 5' similar to RET-II mRNA.</title>
        <authorList>
            <person name="Snider J."/>
            <person name="Sano H."/>
            <person name="Ohta M."/>
        </authorList>
    </citation>
    <scope>NUCLEOTIDE SEQUENCE [MRNA]</scope>
    <source>
        <tissue>Brain</tissue>
    </source>
</reference>
<reference key="3">
    <citation type="journal article" date="2005" name="Science">
        <title>The transcriptional landscape of the mammalian genome.</title>
        <authorList>
            <person name="Carninci P."/>
            <person name="Kasukawa T."/>
            <person name="Katayama S."/>
            <person name="Gough J."/>
            <person name="Frith M.C."/>
            <person name="Maeda N."/>
            <person name="Oyama R."/>
            <person name="Ravasi T."/>
            <person name="Lenhard B."/>
            <person name="Wells C."/>
            <person name="Kodzius R."/>
            <person name="Shimokawa K."/>
            <person name="Bajic V.B."/>
            <person name="Brenner S.E."/>
            <person name="Batalov S."/>
            <person name="Forrest A.R."/>
            <person name="Zavolan M."/>
            <person name="Davis M.J."/>
            <person name="Wilming L.G."/>
            <person name="Aidinis V."/>
            <person name="Allen J.E."/>
            <person name="Ambesi-Impiombato A."/>
            <person name="Apweiler R."/>
            <person name="Aturaliya R.N."/>
            <person name="Bailey T.L."/>
            <person name="Bansal M."/>
            <person name="Baxter L."/>
            <person name="Beisel K.W."/>
            <person name="Bersano T."/>
            <person name="Bono H."/>
            <person name="Chalk A.M."/>
            <person name="Chiu K.P."/>
            <person name="Choudhary V."/>
            <person name="Christoffels A."/>
            <person name="Clutterbuck D.R."/>
            <person name="Crowe M.L."/>
            <person name="Dalla E."/>
            <person name="Dalrymple B.P."/>
            <person name="de Bono B."/>
            <person name="Della Gatta G."/>
            <person name="di Bernardo D."/>
            <person name="Down T."/>
            <person name="Engstrom P."/>
            <person name="Fagiolini M."/>
            <person name="Faulkner G."/>
            <person name="Fletcher C.F."/>
            <person name="Fukushima T."/>
            <person name="Furuno M."/>
            <person name="Futaki S."/>
            <person name="Gariboldi M."/>
            <person name="Georgii-Hemming P."/>
            <person name="Gingeras T.R."/>
            <person name="Gojobori T."/>
            <person name="Green R.E."/>
            <person name="Gustincich S."/>
            <person name="Harbers M."/>
            <person name="Hayashi Y."/>
            <person name="Hensch T.K."/>
            <person name="Hirokawa N."/>
            <person name="Hill D."/>
            <person name="Huminiecki L."/>
            <person name="Iacono M."/>
            <person name="Ikeo K."/>
            <person name="Iwama A."/>
            <person name="Ishikawa T."/>
            <person name="Jakt M."/>
            <person name="Kanapin A."/>
            <person name="Katoh M."/>
            <person name="Kawasawa Y."/>
            <person name="Kelso J."/>
            <person name="Kitamura H."/>
            <person name="Kitano H."/>
            <person name="Kollias G."/>
            <person name="Krishnan S.P."/>
            <person name="Kruger A."/>
            <person name="Kummerfeld S.K."/>
            <person name="Kurochkin I.V."/>
            <person name="Lareau L.F."/>
            <person name="Lazarevic D."/>
            <person name="Lipovich L."/>
            <person name="Liu J."/>
            <person name="Liuni S."/>
            <person name="McWilliam S."/>
            <person name="Madan Babu M."/>
            <person name="Madera M."/>
            <person name="Marchionni L."/>
            <person name="Matsuda H."/>
            <person name="Matsuzawa S."/>
            <person name="Miki H."/>
            <person name="Mignone F."/>
            <person name="Miyake S."/>
            <person name="Morris K."/>
            <person name="Mottagui-Tabar S."/>
            <person name="Mulder N."/>
            <person name="Nakano N."/>
            <person name="Nakauchi H."/>
            <person name="Ng P."/>
            <person name="Nilsson R."/>
            <person name="Nishiguchi S."/>
            <person name="Nishikawa S."/>
            <person name="Nori F."/>
            <person name="Ohara O."/>
            <person name="Okazaki Y."/>
            <person name="Orlando V."/>
            <person name="Pang K.C."/>
            <person name="Pavan W.J."/>
            <person name="Pavesi G."/>
            <person name="Pesole G."/>
            <person name="Petrovsky N."/>
            <person name="Piazza S."/>
            <person name="Reed J."/>
            <person name="Reid J.F."/>
            <person name="Ring B.Z."/>
            <person name="Ringwald M."/>
            <person name="Rost B."/>
            <person name="Ruan Y."/>
            <person name="Salzberg S.L."/>
            <person name="Sandelin A."/>
            <person name="Schneider C."/>
            <person name="Schoenbach C."/>
            <person name="Sekiguchi K."/>
            <person name="Semple C.A."/>
            <person name="Seno S."/>
            <person name="Sessa L."/>
            <person name="Sheng Y."/>
            <person name="Shibata Y."/>
            <person name="Shimada H."/>
            <person name="Shimada K."/>
            <person name="Silva D."/>
            <person name="Sinclair B."/>
            <person name="Sperling S."/>
            <person name="Stupka E."/>
            <person name="Sugiura K."/>
            <person name="Sultana R."/>
            <person name="Takenaka Y."/>
            <person name="Taki K."/>
            <person name="Tammoja K."/>
            <person name="Tan S.L."/>
            <person name="Tang S."/>
            <person name="Taylor M.S."/>
            <person name="Tegner J."/>
            <person name="Teichmann S.A."/>
            <person name="Ueda H.R."/>
            <person name="van Nimwegen E."/>
            <person name="Verardo R."/>
            <person name="Wei C.L."/>
            <person name="Yagi K."/>
            <person name="Yamanishi H."/>
            <person name="Zabarovsky E."/>
            <person name="Zhu S."/>
            <person name="Zimmer A."/>
            <person name="Hide W."/>
            <person name="Bult C."/>
            <person name="Grimmond S.M."/>
            <person name="Teasdale R.D."/>
            <person name="Liu E.T."/>
            <person name="Brusic V."/>
            <person name="Quackenbush J."/>
            <person name="Wahlestedt C."/>
            <person name="Mattick J.S."/>
            <person name="Hume D.A."/>
            <person name="Kai C."/>
            <person name="Sasaki D."/>
            <person name="Tomaru Y."/>
            <person name="Fukuda S."/>
            <person name="Kanamori-Katayama M."/>
            <person name="Suzuki M."/>
            <person name="Aoki J."/>
            <person name="Arakawa T."/>
            <person name="Iida J."/>
            <person name="Imamura K."/>
            <person name="Itoh M."/>
            <person name="Kato T."/>
            <person name="Kawaji H."/>
            <person name="Kawagashira N."/>
            <person name="Kawashima T."/>
            <person name="Kojima M."/>
            <person name="Kondo S."/>
            <person name="Konno H."/>
            <person name="Nakano K."/>
            <person name="Ninomiya N."/>
            <person name="Nishio T."/>
            <person name="Okada M."/>
            <person name="Plessy C."/>
            <person name="Shibata K."/>
            <person name="Shiraki T."/>
            <person name="Suzuki S."/>
            <person name="Tagami M."/>
            <person name="Waki K."/>
            <person name="Watahiki A."/>
            <person name="Okamura-Oho Y."/>
            <person name="Suzuki H."/>
            <person name="Kawai J."/>
            <person name="Hayashizaki Y."/>
        </authorList>
    </citation>
    <scope>NUCLEOTIDE SEQUENCE [LARGE SCALE MRNA]</scope>
    <source>
        <strain>C57BL/6J</strain>
        <tissue>Bone marrow</tissue>
        <tissue>Kidney</tissue>
        <tissue>Spinal cord</tissue>
    </source>
</reference>
<reference key="4">
    <citation type="journal article" date="2004" name="Genome Res.">
        <title>The status, quality, and expansion of the NIH full-length cDNA project: the Mammalian Gene Collection (MGC).</title>
        <authorList>
            <consortium name="The MGC Project Team"/>
        </authorList>
    </citation>
    <scope>NUCLEOTIDE SEQUENCE [LARGE SCALE MRNA]</scope>
    <source>
        <strain>C57BL/6J</strain>
        <strain>FVB/N</strain>
        <tissue>Brain</tissue>
        <tissue>Kidney</tissue>
    </source>
</reference>
<reference key="5">
    <citation type="journal article" date="2007" name="Proc. Natl. Acad. Sci. U.S.A.">
        <title>Large-scale phosphorylation analysis of mouse liver.</title>
        <authorList>
            <person name="Villen J."/>
            <person name="Beausoleil S.A."/>
            <person name="Gerber S.A."/>
            <person name="Gygi S.P."/>
        </authorList>
    </citation>
    <scope>PHOSPHORYLATION [LARGE SCALE ANALYSIS] AT SER-116</scope>
    <scope>IDENTIFICATION BY MASS SPECTROMETRY [LARGE SCALE ANALYSIS]</scope>
    <source>
        <tissue>Liver</tissue>
    </source>
</reference>
<reference key="6">
    <citation type="journal article" date="2010" name="Cell">
        <title>A tissue-specific atlas of mouse protein phosphorylation and expression.</title>
        <authorList>
            <person name="Huttlin E.L."/>
            <person name="Jedrychowski M.P."/>
            <person name="Elias J.E."/>
            <person name="Goswami T."/>
            <person name="Rad R."/>
            <person name="Beausoleil S.A."/>
            <person name="Villen J."/>
            <person name="Haas W."/>
            <person name="Sowa M.E."/>
            <person name="Gygi S.P."/>
        </authorList>
    </citation>
    <scope>PHOSPHORYLATION [LARGE SCALE ANALYSIS] AT SER-116</scope>
    <scope>IDENTIFICATION BY MASS SPECTROMETRY [LARGE SCALE ANALYSIS]</scope>
    <source>
        <tissue>Brain</tissue>
        <tissue>Brown adipose tissue</tissue>
        <tissue>Heart</tissue>
        <tissue>Kidney</tissue>
        <tissue>Liver</tissue>
        <tissue>Lung</tissue>
        <tissue>Pancreas</tissue>
        <tissue>Spleen</tissue>
        <tissue>Testis</tissue>
    </source>
</reference>
<gene>
    <name type="primary">Golga5</name>
    <name type="synonym">Retii</name>
</gene>
<protein>
    <recommendedName>
        <fullName>Golgin subfamily A member 5</fullName>
    </recommendedName>
    <alternativeName>
        <fullName>Golgin-84</fullName>
    </alternativeName>
    <alternativeName>
        <fullName>Protein Ret-II</fullName>
    </alternativeName>
    <alternativeName>
        <fullName>Protein Sumiko</fullName>
    </alternativeName>
</protein>
<keyword id="KW-0007">Acetylation</keyword>
<keyword id="KW-0175">Coiled coil</keyword>
<keyword id="KW-0333">Golgi apparatus</keyword>
<keyword id="KW-0472">Membrane</keyword>
<keyword id="KW-0488">Methylation</keyword>
<keyword id="KW-0597">Phosphoprotein</keyword>
<keyword id="KW-1185">Reference proteome</keyword>
<keyword id="KW-0812">Transmembrane</keyword>
<keyword id="KW-1133">Transmembrane helix</keyword>
<sequence>MSWFADLAGRAEDLLNRVDQGAATALRKENTSNIFYSKNTDYPELQQQNTDSNYQTGQKANYISSAADNIRHQKATILAGTANVKVGSRTVGDATHPTEHASAPRPSSQFVRRKKSEPDDELLFDFLNSSQKEPTGRVEVKKEKGRAPVSPSSPSGVSSVNTSVTTTKAMGGNAGSQSPGVNSSDSVPEVHKEPSEESTAPSATSEEHSSTPSDGSSRSQELSNLRLENQLLRNEVQSLNQEMASLLQRSKETQEELNKARVRVEKWNVDNSKSDRITRELRAQVDDLTEAVAAKDSQLAVLKVRLQEADQVLSSRTEALEALRSEKSRIMQDHKEGSSLQNQALQTLQERLHEADATLKREQESYKQMQSEFAARLNKMEVDRQNLAEAVTLAERKYSEEKKKVDELQQQVKLHRASLESAKQELVDYKQKATRILQSKEKLINSLKEGSSFEGLESSTASSMELEELRHEKEMQKEEIQKLMGQMHQLRSELQDMEAQQVSEAESAREQLQDLQDQIAKQRTSKQELETELERMKQEFRYMEEDLHRTKNTLQSRIKDREEEIQKLRNQLTNKTLSNSSQSELESRLHQLTETLIQKQTMLESLSTEKNSLVFQLERLEQQVHSASSGPNSGSAINMSGVDSGEGTRLRNVPVLFNDTETNLAGMYGKVRKAASSIDQFSIRLGIFLRRYPIARVFVIIYMALLHLWVMIVLLTYSPEMHHDQPYGK</sequence>
<dbReference type="EMBL" id="AF026274">
    <property type="protein sequence ID" value="AAF21628.1"/>
    <property type="molecule type" value="mRNA"/>
</dbReference>
<dbReference type="EMBL" id="AB016784">
    <property type="protein sequence ID" value="BAA33010.1"/>
    <property type="molecule type" value="mRNA"/>
</dbReference>
<dbReference type="EMBL" id="AK138455">
    <property type="protein sequence ID" value="BAE23668.1"/>
    <property type="molecule type" value="mRNA"/>
</dbReference>
<dbReference type="EMBL" id="AK152533">
    <property type="protein sequence ID" value="BAE31289.1"/>
    <property type="molecule type" value="mRNA"/>
</dbReference>
<dbReference type="EMBL" id="AK153010">
    <property type="protein sequence ID" value="BAE31649.1"/>
    <property type="molecule type" value="mRNA"/>
</dbReference>
<dbReference type="EMBL" id="AK168765">
    <property type="protein sequence ID" value="BAE40601.1"/>
    <property type="molecule type" value="mRNA"/>
</dbReference>
<dbReference type="EMBL" id="BC016883">
    <property type="protein sequence ID" value="AAH16883.1"/>
    <property type="molecule type" value="mRNA"/>
</dbReference>
<dbReference type="EMBL" id="BC086782">
    <property type="protein sequence ID" value="AAH86782.1"/>
    <property type="molecule type" value="mRNA"/>
</dbReference>
<dbReference type="CCDS" id="CCDS36526.1"/>
<dbReference type="RefSeq" id="NP_001185933.1">
    <property type="nucleotide sequence ID" value="NM_001199004.1"/>
</dbReference>
<dbReference type="RefSeq" id="NP_038775.1">
    <property type="nucleotide sequence ID" value="NM_013747.4"/>
</dbReference>
<dbReference type="RefSeq" id="XP_006515998.1">
    <property type="nucleotide sequence ID" value="XM_006515935.5"/>
</dbReference>
<dbReference type="SMR" id="Q9QYE6"/>
<dbReference type="BioGRID" id="205157">
    <property type="interactions" value="4"/>
</dbReference>
<dbReference type="FunCoup" id="Q9QYE6">
    <property type="interactions" value="1910"/>
</dbReference>
<dbReference type="IntAct" id="Q9QYE6">
    <property type="interactions" value="1"/>
</dbReference>
<dbReference type="STRING" id="10090.ENSMUSP00000021609"/>
<dbReference type="GlyGen" id="Q9QYE6">
    <property type="glycosylation" value="1 site, 1 O-linked glycan (1 site)"/>
</dbReference>
<dbReference type="iPTMnet" id="Q9QYE6"/>
<dbReference type="PhosphoSitePlus" id="Q9QYE6"/>
<dbReference type="jPOST" id="Q9QYE6"/>
<dbReference type="PaxDb" id="10090-ENSMUSP00000137305"/>
<dbReference type="PeptideAtlas" id="Q9QYE6"/>
<dbReference type="ProteomicsDB" id="267742"/>
<dbReference type="Pumba" id="Q9QYE6"/>
<dbReference type="Antibodypedia" id="15">
    <property type="antibodies" value="274 antibodies from 26 providers"/>
</dbReference>
<dbReference type="Ensembl" id="ENSMUST00000021609.10">
    <property type="protein sequence ID" value="ENSMUSP00000021609.9"/>
    <property type="gene ID" value="ENSMUSG00000021192.17"/>
</dbReference>
<dbReference type="Ensembl" id="ENSMUST00000179218.9">
    <property type="protein sequence ID" value="ENSMUSP00000137305.2"/>
    <property type="gene ID" value="ENSMUSG00000021192.17"/>
</dbReference>
<dbReference type="GeneID" id="27277"/>
<dbReference type="KEGG" id="mmu:27277"/>
<dbReference type="UCSC" id="uc007oug.2">
    <property type="organism name" value="mouse"/>
</dbReference>
<dbReference type="AGR" id="MGI:1351475"/>
<dbReference type="CTD" id="9950"/>
<dbReference type="MGI" id="MGI:1351475">
    <property type="gene designation" value="Golga5"/>
</dbReference>
<dbReference type="VEuPathDB" id="HostDB:ENSMUSG00000021192"/>
<dbReference type="eggNOG" id="KOG4677">
    <property type="taxonomic scope" value="Eukaryota"/>
</dbReference>
<dbReference type="GeneTree" id="ENSGT00390000018470"/>
<dbReference type="HOGENOM" id="CLU_022484_0_0_1"/>
<dbReference type="InParanoid" id="Q9QYE6"/>
<dbReference type="OMA" id="CSSYEAH"/>
<dbReference type="OrthoDB" id="248903at2759"/>
<dbReference type="PhylomeDB" id="Q9QYE6"/>
<dbReference type="TreeFam" id="TF319468"/>
<dbReference type="BioGRID-ORCS" id="27277">
    <property type="hits" value="4 hits in 79 CRISPR screens"/>
</dbReference>
<dbReference type="ChiTaRS" id="Golga5">
    <property type="organism name" value="mouse"/>
</dbReference>
<dbReference type="PRO" id="PR:Q9QYE6"/>
<dbReference type="Proteomes" id="UP000000589">
    <property type="component" value="Chromosome 12"/>
</dbReference>
<dbReference type="RNAct" id="Q9QYE6">
    <property type="molecule type" value="protein"/>
</dbReference>
<dbReference type="Bgee" id="ENSMUSG00000021192">
    <property type="expression patterns" value="Expressed in animal zygote and 268 other cell types or tissues"/>
</dbReference>
<dbReference type="ExpressionAtlas" id="Q9QYE6">
    <property type="expression patterns" value="baseline and differential"/>
</dbReference>
<dbReference type="GO" id="GO:0005801">
    <property type="term" value="C:cis-Golgi network"/>
    <property type="evidence" value="ECO:0007669"/>
    <property type="project" value="Ensembl"/>
</dbReference>
<dbReference type="GO" id="GO:0005794">
    <property type="term" value="C:Golgi apparatus"/>
    <property type="evidence" value="ECO:0000250"/>
    <property type="project" value="UniProtKB"/>
</dbReference>
<dbReference type="GO" id="GO:0031985">
    <property type="term" value="C:Golgi cisterna"/>
    <property type="evidence" value="ECO:0007669"/>
    <property type="project" value="Ensembl"/>
</dbReference>
<dbReference type="GO" id="GO:0000139">
    <property type="term" value="C:Golgi membrane"/>
    <property type="evidence" value="ECO:0000314"/>
    <property type="project" value="MGI"/>
</dbReference>
<dbReference type="GO" id="GO:0042803">
    <property type="term" value="F:protein homodimerization activity"/>
    <property type="evidence" value="ECO:0000250"/>
    <property type="project" value="UniProtKB"/>
</dbReference>
<dbReference type="GO" id="GO:0031267">
    <property type="term" value="F:small GTPase binding"/>
    <property type="evidence" value="ECO:0007669"/>
    <property type="project" value="Ensembl"/>
</dbReference>
<dbReference type="GO" id="GO:0007030">
    <property type="term" value="P:Golgi organization"/>
    <property type="evidence" value="ECO:0000250"/>
    <property type="project" value="UniProtKB"/>
</dbReference>
<dbReference type="GO" id="GO:0048193">
    <property type="term" value="P:Golgi vesicle transport"/>
    <property type="evidence" value="ECO:0000250"/>
    <property type="project" value="UniProtKB"/>
</dbReference>
<dbReference type="FunFam" id="1.10.287.1490:FF:000009">
    <property type="entry name" value="Golgin subfamily A member 5"/>
    <property type="match status" value="1"/>
</dbReference>
<dbReference type="Gene3D" id="1.20.1170.10">
    <property type="match status" value="1"/>
</dbReference>
<dbReference type="InterPro" id="IPR019177">
    <property type="entry name" value="Golgin_subfamily_A_member_5"/>
</dbReference>
<dbReference type="PANTHER" id="PTHR13815:SF7">
    <property type="entry name" value="GOLGIN SUBFAMILY A MEMBER 5"/>
    <property type="match status" value="1"/>
</dbReference>
<dbReference type="PANTHER" id="PTHR13815">
    <property type="entry name" value="GOLGIN-84"/>
    <property type="match status" value="1"/>
</dbReference>
<dbReference type="Pfam" id="PF09787">
    <property type="entry name" value="Golgin_A5"/>
    <property type="match status" value="1"/>
</dbReference>
<proteinExistence type="evidence at protein level"/>
<evidence type="ECO:0000250" key="1"/>
<evidence type="ECO:0000250" key="2">
    <source>
        <dbReference type="UniProtKB" id="Q3ZU82"/>
    </source>
</evidence>
<evidence type="ECO:0000250" key="3">
    <source>
        <dbReference type="UniProtKB" id="Q8TBA6"/>
    </source>
</evidence>
<evidence type="ECO:0000255" key="4"/>
<evidence type="ECO:0000256" key="5">
    <source>
        <dbReference type="SAM" id="MobiDB-lite"/>
    </source>
</evidence>
<evidence type="ECO:0000305" key="6"/>
<evidence type="ECO:0007744" key="7">
    <source>
    </source>
</evidence>
<evidence type="ECO:0007744" key="8">
    <source>
    </source>
</evidence>